<comment type="function">
    <text evidence="3">Plays a role in spermatogenesis, possibly acting in the regulation of the autophagy pathway.</text>
</comment>
<comment type="subunit">
    <text evidence="1">Interacts with GABARAP; this interaction may be important for GABARAP protein stability (By similarity). Interacts with LAMP2; this interaction may be important for LAMP2 protein stability (By similarity).</text>
</comment>
<comment type="subcellular location">
    <subcellularLocation>
        <location evidence="3">Cytoplasm</location>
    </subcellularLocation>
    <subcellularLocation>
        <location evidence="3">Cytoplasmic vesicle</location>
        <location evidence="3">Secretory vesicle</location>
        <location evidence="3">Acrosome</location>
    </subcellularLocation>
    <subcellularLocation>
        <location evidence="3">Cell projection</location>
        <location evidence="3">Cilium</location>
        <location evidence="3">Flagellum</location>
    </subcellularLocation>
    <text evidence="3">Mainly observed in the cytoplasm of spermatocyte and spermatogonia, and also found in acrosome or flagellum in early and late spermatids.</text>
</comment>
<comment type="tissue specificity">
    <text evidence="3">Expressed in spermatozoa (at protein level).</text>
</comment>
<comment type="developmental stage">
    <text evidence="3">Expressed during spermatogenesis, with highest expression in late spermatids. Detected in the cytoplasm of spermatocyte and spermatogonia. Also found in acrosome or flagellum in early and late spermatids (at protein level).</text>
</comment>
<comment type="disruption phenotype">
    <text evidence="3">Knockout mice do not exhibit any gross abnormalities and survive to adulthood. Homozygous females are fertile, while the numbers of both litters and pups progressively decrease in hemizygous males over time. Males are totally infertile around 32 weeks of age.</text>
</comment>
<gene>
    <name type="primary">Ct55</name>
</gene>
<dbReference type="EMBL" id="AK015678">
    <property type="protein sequence ID" value="BAB29927.1"/>
    <property type="molecule type" value="mRNA"/>
</dbReference>
<dbReference type="EMBL" id="BC115663">
    <property type="protein sequence ID" value="AAI15664.1"/>
    <property type="molecule type" value="mRNA"/>
</dbReference>
<dbReference type="EMBL" id="BC115664">
    <property type="protein sequence ID" value="AAI15665.1"/>
    <property type="molecule type" value="mRNA"/>
</dbReference>
<dbReference type="CCDS" id="CCDS30136.1"/>
<dbReference type="RefSeq" id="NP_083418.1">
    <property type="nucleotide sequence ID" value="NM_029142.1"/>
</dbReference>
<dbReference type="SMR" id="Q14BQ3"/>
<dbReference type="FunCoup" id="Q14BQ3">
    <property type="interactions" value="7"/>
</dbReference>
<dbReference type="STRING" id="10090.ENSMUSP00000064619"/>
<dbReference type="PhosphoSitePlus" id="Q14BQ3"/>
<dbReference type="SwissPalm" id="Q14BQ3"/>
<dbReference type="PaxDb" id="10090-ENSMUSP00000064619"/>
<dbReference type="ProteomicsDB" id="341014"/>
<dbReference type="Ensembl" id="ENSMUST00000069209.2">
    <property type="protein sequence ID" value="ENSMUSP00000064619.2"/>
    <property type="gene ID" value="ENSMUSG00000055555.3"/>
</dbReference>
<dbReference type="GeneID" id="75013"/>
<dbReference type="KEGG" id="mmu:75013"/>
<dbReference type="UCSC" id="uc009tfi.1">
    <property type="organism name" value="mouse"/>
</dbReference>
<dbReference type="AGR" id="MGI:1922263"/>
<dbReference type="CTD" id="54967"/>
<dbReference type="MGI" id="MGI:1922263">
    <property type="gene designation" value="Ct55"/>
</dbReference>
<dbReference type="VEuPathDB" id="HostDB:ENSMUSG00000055555"/>
<dbReference type="eggNOG" id="KOG1804">
    <property type="taxonomic scope" value="Eukaryota"/>
</dbReference>
<dbReference type="GeneTree" id="ENSGT00940000164063"/>
<dbReference type="HOGENOM" id="CLU_1165540_0_0_1"/>
<dbReference type="OMA" id="VHEVCIT"/>
<dbReference type="OrthoDB" id="9573766at2759"/>
<dbReference type="TreeFam" id="TF338795"/>
<dbReference type="BioGRID-ORCS" id="75013">
    <property type="hits" value="2 hits in 77 CRISPR screens"/>
</dbReference>
<dbReference type="ChiTaRS" id="4930502E18Rik">
    <property type="organism name" value="mouse"/>
</dbReference>
<dbReference type="PRO" id="PR:Q14BQ3"/>
<dbReference type="Proteomes" id="UP000000589">
    <property type="component" value="Chromosome X"/>
</dbReference>
<dbReference type="RNAct" id="Q14BQ3">
    <property type="molecule type" value="protein"/>
</dbReference>
<dbReference type="Bgee" id="ENSMUSG00000055555">
    <property type="expression patterns" value="Expressed in decidua and 43 other cell types or tissues"/>
</dbReference>
<dbReference type="GO" id="GO:0001669">
    <property type="term" value="C:acrosomal vesicle"/>
    <property type="evidence" value="ECO:0000314"/>
    <property type="project" value="UniProtKB"/>
</dbReference>
<dbReference type="GO" id="GO:0005737">
    <property type="term" value="C:cytoplasm"/>
    <property type="evidence" value="ECO:0000314"/>
    <property type="project" value="UniProtKB"/>
</dbReference>
<dbReference type="GO" id="GO:0036126">
    <property type="term" value="C:sperm flagellum"/>
    <property type="evidence" value="ECO:0000314"/>
    <property type="project" value="UniProtKB"/>
</dbReference>
<dbReference type="GO" id="GO:0007283">
    <property type="term" value="P:spermatogenesis"/>
    <property type="evidence" value="ECO:0000315"/>
    <property type="project" value="UniProtKB"/>
</dbReference>
<dbReference type="PANTHER" id="PTHR45418">
    <property type="entry name" value="CANCER/TESTIS ANTIGEN 55"/>
    <property type="match status" value="1"/>
</dbReference>
<dbReference type="PANTHER" id="PTHR45418:SF4">
    <property type="entry name" value="CANCER_TESTIS ANTIGEN 55"/>
    <property type="match status" value="1"/>
</dbReference>
<reference key="1">
    <citation type="journal article" date="2005" name="Science">
        <title>The transcriptional landscape of the mammalian genome.</title>
        <authorList>
            <person name="Carninci P."/>
            <person name="Kasukawa T."/>
            <person name="Katayama S."/>
            <person name="Gough J."/>
            <person name="Frith M.C."/>
            <person name="Maeda N."/>
            <person name="Oyama R."/>
            <person name="Ravasi T."/>
            <person name="Lenhard B."/>
            <person name="Wells C."/>
            <person name="Kodzius R."/>
            <person name="Shimokawa K."/>
            <person name="Bajic V.B."/>
            <person name="Brenner S.E."/>
            <person name="Batalov S."/>
            <person name="Forrest A.R."/>
            <person name="Zavolan M."/>
            <person name="Davis M.J."/>
            <person name="Wilming L.G."/>
            <person name="Aidinis V."/>
            <person name="Allen J.E."/>
            <person name="Ambesi-Impiombato A."/>
            <person name="Apweiler R."/>
            <person name="Aturaliya R.N."/>
            <person name="Bailey T.L."/>
            <person name="Bansal M."/>
            <person name="Baxter L."/>
            <person name="Beisel K.W."/>
            <person name="Bersano T."/>
            <person name="Bono H."/>
            <person name="Chalk A.M."/>
            <person name="Chiu K.P."/>
            <person name="Choudhary V."/>
            <person name="Christoffels A."/>
            <person name="Clutterbuck D.R."/>
            <person name="Crowe M.L."/>
            <person name="Dalla E."/>
            <person name="Dalrymple B.P."/>
            <person name="de Bono B."/>
            <person name="Della Gatta G."/>
            <person name="di Bernardo D."/>
            <person name="Down T."/>
            <person name="Engstrom P."/>
            <person name="Fagiolini M."/>
            <person name="Faulkner G."/>
            <person name="Fletcher C.F."/>
            <person name="Fukushima T."/>
            <person name="Furuno M."/>
            <person name="Futaki S."/>
            <person name="Gariboldi M."/>
            <person name="Georgii-Hemming P."/>
            <person name="Gingeras T.R."/>
            <person name="Gojobori T."/>
            <person name="Green R.E."/>
            <person name="Gustincich S."/>
            <person name="Harbers M."/>
            <person name="Hayashi Y."/>
            <person name="Hensch T.K."/>
            <person name="Hirokawa N."/>
            <person name="Hill D."/>
            <person name="Huminiecki L."/>
            <person name="Iacono M."/>
            <person name="Ikeo K."/>
            <person name="Iwama A."/>
            <person name="Ishikawa T."/>
            <person name="Jakt M."/>
            <person name="Kanapin A."/>
            <person name="Katoh M."/>
            <person name="Kawasawa Y."/>
            <person name="Kelso J."/>
            <person name="Kitamura H."/>
            <person name="Kitano H."/>
            <person name="Kollias G."/>
            <person name="Krishnan S.P."/>
            <person name="Kruger A."/>
            <person name="Kummerfeld S.K."/>
            <person name="Kurochkin I.V."/>
            <person name="Lareau L.F."/>
            <person name="Lazarevic D."/>
            <person name="Lipovich L."/>
            <person name="Liu J."/>
            <person name="Liuni S."/>
            <person name="McWilliam S."/>
            <person name="Madan Babu M."/>
            <person name="Madera M."/>
            <person name="Marchionni L."/>
            <person name="Matsuda H."/>
            <person name="Matsuzawa S."/>
            <person name="Miki H."/>
            <person name="Mignone F."/>
            <person name="Miyake S."/>
            <person name="Morris K."/>
            <person name="Mottagui-Tabar S."/>
            <person name="Mulder N."/>
            <person name="Nakano N."/>
            <person name="Nakauchi H."/>
            <person name="Ng P."/>
            <person name="Nilsson R."/>
            <person name="Nishiguchi S."/>
            <person name="Nishikawa S."/>
            <person name="Nori F."/>
            <person name="Ohara O."/>
            <person name="Okazaki Y."/>
            <person name="Orlando V."/>
            <person name="Pang K.C."/>
            <person name="Pavan W.J."/>
            <person name="Pavesi G."/>
            <person name="Pesole G."/>
            <person name="Petrovsky N."/>
            <person name="Piazza S."/>
            <person name="Reed J."/>
            <person name="Reid J.F."/>
            <person name="Ring B.Z."/>
            <person name="Ringwald M."/>
            <person name="Rost B."/>
            <person name="Ruan Y."/>
            <person name="Salzberg S.L."/>
            <person name="Sandelin A."/>
            <person name="Schneider C."/>
            <person name="Schoenbach C."/>
            <person name="Sekiguchi K."/>
            <person name="Semple C.A."/>
            <person name="Seno S."/>
            <person name="Sessa L."/>
            <person name="Sheng Y."/>
            <person name="Shibata Y."/>
            <person name="Shimada H."/>
            <person name="Shimada K."/>
            <person name="Silva D."/>
            <person name="Sinclair B."/>
            <person name="Sperling S."/>
            <person name="Stupka E."/>
            <person name="Sugiura K."/>
            <person name="Sultana R."/>
            <person name="Takenaka Y."/>
            <person name="Taki K."/>
            <person name="Tammoja K."/>
            <person name="Tan S.L."/>
            <person name="Tang S."/>
            <person name="Taylor M.S."/>
            <person name="Tegner J."/>
            <person name="Teichmann S.A."/>
            <person name="Ueda H.R."/>
            <person name="van Nimwegen E."/>
            <person name="Verardo R."/>
            <person name="Wei C.L."/>
            <person name="Yagi K."/>
            <person name="Yamanishi H."/>
            <person name="Zabarovsky E."/>
            <person name="Zhu S."/>
            <person name="Zimmer A."/>
            <person name="Hide W."/>
            <person name="Bult C."/>
            <person name="Grimmond S.M."/>
            <person name="Teasdale R.D."/>
            <person name="Liu E.T."/>
            <person name="Brusic V."/>
            <person name="Quackenbush J."/>
            <person name="Wahlestedt C."/>
            <person name="Mattick J.S."/>
            <person name="Hume D.A."/>
            <person name="Kai C."/>
            <person name="Sasaki D."/>
            <person name="Tomaru Y."/>
            <person name="Fukuda S."/>
            <person name="Kanamori-Katayama M."/>
            <person name="Suzuki M."/>
            <person name="Aoki J."/>
            <person name="Arakawa T."/>
            <person name="Iida J."/>
            <person name="Imamura K."/>
            <person name="Itoh M."/>
            <person name="Kato T."/>
            <person name="Kawaji H."/>
            <person name="Kawagashira N."/>
            <person name="Kawashima T."/>
            <person name="Kojima M."/>
            <person name="Kondo S."/>
            <person name="Konno H."/>
            <person name="Nakano K."/>
            <person name="Ninomiya N."/>
            <person name="Nishio T."/>
            <person name="Okada M."/>
            <person name="Plessy C."/>
            <person name="Shibata K."/>
            <person name="Shiraki T."/>
            <person name="Suzuki S."/>
            <person name="Tagami M."/>
            <person name="Waki K."/>
            <person name="Watahiki A."/>
            <person name="Okamura-Oho Y."/>
            <person name="Suzuki H."/>
            <person name="Kawai J."/>
            <person name="Hayashizaki Y."/>
        </authorList>
    </citation>
    <scope>NUCLEOTIDE SEQUENCE [LARGE SCALE MRNA]</scope>
    <source>
        <strain>C57BL/6J</strain>
        <tissue>Testis</tissue>
    </source>
</reference>
<reference key="2">
    <citation type="journal article" date="2004" name="Genome Res.">
        <title>The status, quality, and expansion of the NIH full-length cDNA project: the Mammalian Gene Collection (MGC).</title>
        <authorList>
            <consortium name="The MGC Project Team"/>
        </authorList>
    </citation>
    <scope>NUCLEOTIDE SEQUENCE [LARGE SCALE MRNA]</scope>
</reference>
<reference key="3">
    <citation type="journal article" date="2009" name="PLoS Biol.">
        <title>Lineage-specific biology revealed by a finished genome assembly of the mouse.</title>
        <authorList>
            <person name="Church D.M."/>
            <person name="Goodstadt L."/>
            <person name="Hillier L.W."/>
            <person name="Zody M.C."/>
            <person name="Goldstein S."/>
            <person name="She X."/>
            <person name="Bult C.J."/>
            <person name="Agarwala R."/>
            <person name="Cherry J.L."/>
            <person name="DiCuccio M."/>
            <person name="Hlavina W."/>
            <person name="Kapustin Y."/>
            <person name="Meric P."/>
            <person name="Maglott D."/>
            <person name="Birtle Z."/>
            <person name="Marques A.C."/>
            <person name="Graves T."/>
            <person name="Zhou S."/>
            <person name="Teague B."/>
            <person name="Potamousis K."/>
            <person name="Churas C."/>
            <person name="Place M."/>
            <person name="Herschleb J."/>
            <person name="Runnheim R."/>
            <person name="Forrest D."/>
            <person name="Amos-Landgraf J."/>
            <person name="Schwartz D.C."/>
            <person name="Cheng Z."/>
            <person name="Lindblad-Toh K."/>
            <person name="Eichler E.E."/>
            <person name="Ponting C.P."/>
        </authorList>
    </citation>
    <scope>NUCLEOTIDE SEQUENCE [LARGE SCALE GENOMIC DNA]</scope>
    <source>
        <strain>C57BL/6J</strain>
    </source>
</reference>
<reference evidence="6" key="4">
    <citation type="journal article" date="2010" name="Cell">
        <title>A tissue-specific atlas of mouse protein phosphorylation and expression.</title>
        <authorList>
            <person name="Huttlin E.L."/>
            <person name="Jedrychowski M.P."/>
            <person name="Elias J.E."/>
            <person name="Goswami T."/>
            <person name="Rad R."/>
            <person name="Beausoleil S.A."/>
            <person name="Villen J."/>
            <person name="Haas W."/>
            <person name="Sowa M.E."/>
            <person name="Gygi S.P."/>
        </authorList>
    </citation>
    <scope>IDENTIFICATION BY MASS SPECTROMETRY [LARGE SCALE ANALYSIS]</scope>
</reference>
<reference key="5">
    <citation type="journal article" date="2023" name="Cell Death Differ.">
        <title>Deficiency of cancer/testis antigen gene CT55 causes male infertility in humans and mice.</title>
        <authorList>
            <person name="Zhang G."/>
            <person name="Jiang C."/>
            <person name="Yang Y."/>
            <person name="Wang Y."/>
            <person name="Zhou H."/>
            <person name="Dai S."/>
            <person name="Liu M."/>
            <person name="Yang Y."/>
            <person name="Yang L."/>
            <person name="Shen Q."/>
            <person name="Zhang T."/>
            <person name="Zhang X."/>
            <person name="Yang Y."/>
            <person name="Shen Y."/>
        </authorList>
    </citation>
    <scope>FUNCTION</scope>
    <scope>SUBCELLULAR LOCATION</scope>
    <scope>TISSUE SPECIFICITY</scope>
    <scope>DEVELOPMENTAL STAGE</scope>
    <scope>DISRUPTION PHENOTYPE</scope>
</reference>
<evidence type="ECO:0000250" key="1">
    <source>
        <dbReference type="UniProtKB" id="Q8WUE5"/>
    </source>
</evidence>
<evidence type="ECO:0000256" key="2">
    <source>
        <dbReference type="SAM" id="MobiDB-lite"/>
    </source>
</evidence>
<evidence type="ECO:0000269" key="3">
    <source>
    </source>
</evidence>
<evidence type="ECO:0000305" key="4"/>
<evidence type="ECO:0000312" key="5">
    <source>
        <dbReference type="EMBL" id="AAI15665.1"/>
    </source>
</evidence>
<evidence type="ECO:0007744" key="6">
    <source>
    </source>
</evidence>
<name>CT55_MOUSE</name>
<feature type="chain" id="PRO_0000458875" description="Cancer/testis antigen 55">
    <location>
        <begin position="1"/>
        <end position="236"/>
    </location>
</feature>
<feature type="region of interest" description="Disordered" evidence="2">
    <location>
        <begin position="57"/>
        <end position="84"/>
    </location>
</feature>
<feature type="sequence conflict" description="In Ref. 1; BAB29927." evidence="4" ref="1">
    <original>G</original>
    <variation>R</variation>
    <location>
        <position position="125"/>
    </location>
</feature>
<feature type="sequence conflict" description="In Ref. 1; BAB29927." evidence="4" ref="1">
    <original>V</original>
    <variation>A</variation>
    <location>
        <position position="185"/>
    </location>
</feature>
<protein>
    <recommendedName>
        <fullName>Cancer/testis antigen 55</fullName>
    </recommendedName>
</protein>
<accession>Q14BQ3</accession>
<accession>Q9D585</accession>
<organism evidence="5">
    <name type="scientific">Mus musculus</name>
    <name type="common">Mouse</name>
    <dbReference type="NCBI Taxonomy" id="10090"/>
    <lineage>
        <taxon>Eukaryota</taxon>
        <taxon>Metazoa</taxon>
        <taxon>Chordata</taxon>
        <taxon>Craniata</taxon>
        <taxon>Vertebrata</taxon>
        <taxon>Euteleostomi</taxon>
        <taxon>Mammalia</taxon>
        <taxon>Eutheria</taxon>
        <taxon>Euarchontoglires</taxon>
        <taxon>Glires</taxon>
        <taxon>Rodentia</taxon>
        <taxon>Myomorpha</taxon>
        <taxon>Muroidea</taxon>
        <taxon>Muridae</taxon>
        <taxon>Murinae</taxon>
        <taxon>Mus</taxon>
        <taxon>Mus</taxon>
    </lineage>
</organism>
<keyword id="KW-0966">Cell projection</keyword>
<keyword id="KW-0969">Cilium</keyword>
<keyword id="KW-0963">Cytoplasm</keyword>
<keyword id="KW-0968">Cytoplasmic vesicle</keyword>
<keyword id="KW-0217">Developmental protein</keyword>
<keyword id="KW-0282">Flagellum</keyword>
<keyword id="KW-1185">Reference proteome</keyword>
<proteinExistence type="evidence at protein level"/>
<sequence length="236" mass="26281">MHRLISRLRAFFQRKADPKEAKEERQKLLEDATSLQNKQGVVAGSCSNYDCMTKHTRSSADVETGDNPLKAEPNLPAAVEEQSPRGLNAVTVDNDHDEEPSESHMRILLASITSLVGDADYNGHGFSFSLDIACKDFKPYNGDLVEIEFSDEQDTQSRRAILVKPLKHCHLNEVRVTRTDGSTGVLEDTIFFTLDSLKLPSGYVPQPDDVVNVVAVQSMQSNYFWRAVAMTPVQVL</sequence>